<protein>
    <recommendedName>
        <fullName>Interferon regulatory factor 3</fullName>
        <shortName>IRF-3</shortName>
    </recommendedName>
</protein>
<dbReference type="EMBL" id="AB116563">
    <property type="protein sequence ID" value="BAD06317.1"/>
    <property type="molecule type" value="mRNA"/>
</dbReference>
<dbReference type="RefSeq" id="NP_998935.1">
    <property type="nucleotide sequence ID" value="NM_213770.1"/>
</dbReference>
<dbReference type="SMR" id="Q764M6"/>
<dbReference type="FunCoup" id="Q764M6">
    <property type="interactions" value="1670"/>
</dbReference>
<dbReference type="IntAct" id="Q764M6">
    <property type="interactions" value="3"/>
</dbReference>
<dbReference type="STRING" id="9823.ENSSSCP00000028920"/>
<dbReference type="PaxDb" id="9823-ENSSSCP00000003447"/>
<dbReference type="PeptideAtlas" id="Q764M6"/>
<dbReference type="Ensembl" id="ENSSSCT00040019663.1">
    <property type="protein sequence ID" value="ENSSSCP00040008173.1"/>
    <property type="gene ID" value="ENSSSCG00040014662.1"/>
</dbReference>
<dbReference type="GeneID" id="396656"/>
<dbReference type="KEGG" id="ssc:396656"/>
<dbReference type="CTD" id="3661"/>
<dbReference type="eggNOG" id="ENOG502QTRR">
    <property type="taxonomic scope" value="Eukaryota"/>
</dbReference>
<dbReference type="InParanoid" id="Q764M6"/>
<dbReference type="OrthoDB" id="8691508at2759"/>
<dbReference type="Proteomes" id="UP000008227">
    <property type="component" value="Unplaced"/>
</dbReference>
<dbReference type="Proteomes" id="UP000314985">
    <property type="component" value="Unplaced"/>
</dbReference>
<dbReference type="Proteomes" id="UP000694570">
    <property type="component" value="Unplaced"/>
</dbReference>
<dbReference type="Proteomes" id="UP000694571">
    <property type="component" value="Unplaced"/>
</dbReference>
<dbReference type="Proteomes" id="UP000694720">
    <property type="component" value="Unplaced"/>
</dbReference>
<dbReference type="Proteomes" id="UP000694722">
    <property type="component" value="Unplaced"/>
</dbReference>
<dbReference type="Proteomes" id="UP000694723">
    <property type="component" value="Unplaced"/>
</dbReference>
<dbReference type="Proteomes" id="UP000694724">
    <property type="component" value="Unplaced"/>
</dbReference>
<dbReference type="Proteomes" id="UP000694725">
    <property type="component" value="Unplaced"/>
</dbReference>
<dbReference type="Proteomes" id="UP000694726">
    <property type="component" value="Unplaced"/>
</dbReference>
<dbReference type="Proteomes" id="UP000694727">
    <property type="component" value="Unplaced"/>
</dbReference>
<dbReference type="Proteomes" id="UP000694728">
    <property type="component" value="Unplaced"/>
</dbReference>
<dbReference type="GO" id="GO:0005739">
    <property type="term" value="C:mitochondrion"/>
    <property type="evidence" value="ECO:0000250"/>
    <property type="project" value="UniProtKB"/>
</dbReference>
<dbReference type="GO" id="GO:0005634">
    <property type="term" value="C:nucleus"/>
    <property type="evidence" value="ECO:0000318"/>
    <property type="project" value="GO_Central"/>
</dbReference>
<dbReference type="GO" id="GO:0000981">
    <property type="term" value="F:DNA-binding transcription factor activity, RNA polymerase II-specific"/>
    <property type="evidence" value="ECO:0000318"/>
    <property type="project" value="GO_Central"/>
</dbReference>
<dbReference type="GO" id="GO:0000978">
    <property type="term" value="F:RNA polymerase II cis-regulatory region sequence-specific DNA binding"/>
    <property type="evidence" value="ECO:0000318"/>
    <property type="project" value="GO_Central"/>
</dbReference>
<dbReference type="GO" id="GO:0098586">
    <property type="term" value="P:cellular response to virus"/>
    <property type="evidence" value="ECO:0000250"/>
    <property type="project" value="UniProtKB"/>
</dbReference>
<dbReference type="GO" id="GO:0051607">
    <property type="term" value="P:defense response to virus"/>
    <property type="evidence" value="ECO:0000250"/>
    <property type="project" value="UniProtKB"/>
</dbReference>
<dbReference type="GO" id="GO:0002376">
    <property type="term" value="P:immune system process"/>
    <property type="evidence" value="ECO:0000318"/>
    <property type="project" value="GO_Central"/>
</dbReference>
<dbReference type="GO" id="GO:0045087">
    <property type="term" value="P:innate immune response"/>
    <property type="evidence" value="ECO:0007669"/>
    <property type="project" value="UniProtKB-KW"/>
</dbReference>
<dbReference type="GO" id="GO:0045893">
    <property type="term" value="P:positive regulation of DNA-templated transcription"/>
    <property type="evidence" value="ECO:0007669"/>
    <property type="project" value="UniProtKB-ARBA"/>
</dbReference>
<dbReference type="GO" id="GO:0032727">
    <property type="term" value="P:positive regulation of interferon-alpha production"/>
    <property type="evidence" value="ECO:0000250"/>
    <property type="project" value="UniProtKB"/>
</dbReference>
<dbReference type="GO" id="GO:0032728">
    <property type="term" value="P:positive regulation of interferon-beta production"/>
    <property type="evidence" value="ECO:0000250"/>
    <property type="project" value="UniProtKB"/>
</dbReference>
<dbReference type="GO" id="GO:0032481">
    <property type="term" value="P:positive regulation of type I interferon production"/>
    <property type="evidence" value="ECO:0000250"/>
    <property type="project" value="UniProtKB"/>
</dbReference>
<dbReference type="GO" id="GO:0042981">
    <property type="term" value="P:regulation of apoptotic process"/>
    <property type="evidence" value="ECO:0000250"/>
    <property type="project" value="UniProtKB"/>
</dbReference>
<dbReference type="GO" id="GO:0006357">
    <property type="term" value="P:regulation of transcription by RNA polymerase II"/>
    <property type="evidence" value="ECO:0000318"/>
    <property type="project" value="GO_Central"/>
</dbReference>
<dbReference type="GO" id="GO:0035666">
    <property type="term" value="P:TRIF-dependent toll-like receptor signaling pathway"/>
    <property type="evidence" value="ECO:0000250"/>
    <property type="project" value="UniProtKB"/>
</dbReference>
<dbReference type="CDD" id="cd00103">
    <property type="entry name" value="IRF"/>
    <property type="match status" value="1"/>
</dbReference>
<dbReference type="FunFam" id="1.10.10.10:FF:000263">
    <property type="entry name" value="Interferon regulatory factor 3"/>
    <property type="match status" value="1"/>
</dbReference>
<dbReference type="FunFam" id="2.60.200.10:FF:000008">
    <property type="entry name" value="Interferon regulatory factor 3"/>
    <property type="match status" value="1"/>
</dbReference>
<dbReference type="Gene3D" id="2.60.200.10">
    <property type="match status" value="1"/>
</dbReference>
<dbReference type="Gene3D" id="1.10.10.10">
    <property type="entry name" value="Winged helix-like DNA-binding domain superfamily/Winged helix DNA-binding domain"/>
    <property type="match status" value="1"/>
</dbReference>
<dbReference type="InterPro" id="IPR019817">
    <property type="entry name" value="Interferon_reg_fac_CS"/>
</dbReference>
<dbReference type="InterPro" id="IPR001346">
    <property type="entry name" value="Interferon_reg_fact_DNA-bd_dom"/>
</dbReference>
<dbReference type="InterPro" id="IPR019471">
    <property type="entry name" value="Interferon_reg_factor-3"/>
</dbReference>
<dbReference type="InterPro" id="IPR017855">
    <property type="entry name" value="SMAD-like_dom_sf"/>
</dbReference>
<dbReference type="InterPro" id="IPR008984">
    <property type="entry name" value="SMAD_FHA_dom_sf"/>
</dbReference>
<dbReference type="InterPro" id="IPR036388">
    <property type="entry name" value="WH-like_DNA-bd_sf"/>
</dbReference>
<dbReference type="InterPro" id="IPR036390">
    <property type="entry name" value="WH_DNA-bd_sf"/>
</dbReference>
<dbReference type="PANTHER" id="PTHR11949">
    <property type="entry name" value="INTERFERON REGULATORY FACTOR"/>
    <property type="match status" value="1"/>
</dbReference>
<dbReference type="PANTHER" id="PTHR11949:SF1">
    <property type="entry name" value="INTERFERON REGULATORY FACTOR 3"/>
    <property type="match status" value="1"/>
</dbReference>
<dbReference type="Pfam" id="PF00605">
    <property type="entry name" value="IRF"/>
    <property type="match status" value="1"/>
</dbReference>
<dbReference type="Pfam" id="PF10401">
    <property type="entry name" value="IRF-3"/>
    <property type="match status" value="1"/>
</dbReference>
<dbReference type="PRINTS" id="PR00267">
    <property type="entry name" value="INTFRNREGFCT"/>
</dbReference>
<dbReference type="SMART" id="SM00348">
    <property type="entry name" value="IRF"/>
    <property type="match status" value="1"/>
</dbReference>
<dbReference type="SMART" id="SM01243">
    <property type="entry name" value="IRF-3"/>
    <property type="match status" value="1"/>
</dbReference>
<dbReference type="SUPFAM" id="SSF49879">
    <property type="entry name" value="SMAD/FHA domain"/>
    <property type="match status" value="1"/>
</dbReference>
<dbReference type="SUPFAM" id="SSF46785">
    <property type="entry name" value="Winged helix' DNA-binding domain"/>
    <property type="match status" value="1"/>
</dbReference>
<dbReference type="PROSITE" id="PS00601">
    <property type="entry name" value="IRF_1"/>
    <property type="match status" value="1"/>
</dbReference>
<dbReference type="PROSITE" id="PS51507">
    <property type="entry name" value="IRF_2"/>
    <property type="match status" value="1"/>
</dbReference>
<organism>
    <name type="scientific">Sus scrofa</name>
    <name type="common">Pig</name>
    <dbReference type="NCBI Taxonomy" id="9823"/>
    <lineage>
        <taxon>Eukaryota</taxon>
        <taxon>Metazoa</taxon>
        <taxon>Chordata</taxon>
        <taxon>Craniata</taxon>
        <taxon>Vertebrata</taxon>
        <taxon>Euteleostomi</taxon>
        <taxon>Mammalia</taxon>
        <taxon>Eutheria</taxon>
        <taxon>Laurasiatheria</taxon>
        <taxon>Artiodactyla</taxon>
        <taxon>Suina</taxon>
        <taxon>Suidae</taxon>
        <taxon>Sus</taxon>
    </lineage>
</organism>
<feature type="chain" id="PRO_0000259485" description="Interferon regulatory factor 3">
    <location>
        <begin position="1"/>
        <end position="419"/>
    </location>
</feature>
<feature type="DNA-binding region" description="IRF tryptophan pentad repeat" evidence="3">
    <location>
        <begin position="5"/>
        <end position="111"/>
    </location>
</feature>
<feature type="region of interest" description="Disordered" evidence="4">
    <location>
        <begin position="118"/>
        <end position="137"/>
    </location>
</feature>
<feature type="region of interest" description="Mediates interaction with ZDHHC11" evidence="2">
    <location>
        <begin position="140"/>
        <end position="419"/>
    </location>
</feature>
<feature type="region of interest" description="Interaction with HERC5" evidence="2">
    <location>
        <begin position="198"/>
        <end position="358"/>
    </location>
</feature>
<feature type="site" description="Cleavage; by CASP3" evidence="2">
    <location>
        <begin position="121"/>
        <end position="122"/>
    </location>
</feature>
<feature type="site" description="Cleavage; by CASP3" evidence="2">
    <location>
        <begin position="125"/>
        <end position="126"/>
    </location>
</feature>
<feature type="modified residue" description="Phosphothreonine" evidence="2">
    <location>
        <position position="3"/>
    </location>
</feature>
<feature type="modified residue" description="Phosphoserine" evidence="2">
    <location>
        <position position="14"/>
    </location>
</feature>
<feature type="modified residue" description="Phosphothreonine" evidence="2">
    <location>
        <position position="75"/>
    </location>
</feature>
<feature type="modified residue" description="Phosphoserine" evidence="2">
    <location>
        <position position="97"/>
    </location>
</feature>
<feature type="modified residue" description="Phosphoserine" evidence="1">
    <location>
        <position position="123"/>
    </location>
</feature>
<feature type="modified residue" description="Phosphothreonine" evidence="2">
    <location>
        <position position="235"/>
    </location>
</feature>
<feature type="modified residue" description="Phosphothreonine" evidence="2">
    <location>
        <position position="251"/>
    </location>
</feature>
<feature type="modified residue" description="N6-acetyllysine" evidence="1">
    <location>
        <position position="364"/>
    </location>
</feature>
<feature type="modified residue" description="Phosphoserine" evidence="2">
    <location>
        <position position="383"/>
    </location>
</feature>
<feature type="modified residue" description="Diphosphoserine" evidence="2">
    <location>
        <position position="384"/>
    </location>
</feature>
<feature type="modified residue" description="Phosphoserine; by TBK1" evidence="2">
    <location>
        <position position="384"/>
    </location>
</feature>
<feature type="modified residue" description="Phosphoserine; by IKKE" evidence="2">
    <location>
        <position position="394"/>
    </location>
</feature>
<feature type="modified residue" description="Phosphoserine" evidence="2">
    <location>
        <position position="396"/>
    </location>
</feature>
<feature type="modified residue" description="Phosphothreonine" evidence="2">
    <location>
        <position position="402"/>
    </location>
</feature>
<feature type="disulfide bond" evidence="2">
    <location>
        <begin position="265"/>
        <end position="287"/>
    </location>
</feature>
<feature type="cross-link" description="Glycyl lysine isopeptide (Lys-Gly) (interchain with G-Cter in ISG15)" evidence="2">
    <location>
        <position position="191"/>
    </location>
</feature>
<feature type="cross-link" description="Glycyl lysine isopeptide (Lys-Gly) (interchain with G-Cter in ISG15)" evidence="2">
    <location>
        <position position="358"/>
    </location>
</feature>
<feature type="cross-link" description="Glycyl lysine isopeptide (Lys-Gly) (interchain with G-Cter in ISG15)" evidence="2">
    <location>
        <position position="364"/>
    </location>
</feature>
<keyword id="KW-0007">Acetylation</keyword>
<keyword id="KW-0010">Activator</keyword>
<keyword id="KW-0051">Antiviral defense</keyword>
<keyword id="KW-0963">Cytoplasm</keyword>
<keyword id="KW-1015">Disulfide bond</keyword>
<keyword id="KW-0238">DNA-binding</keyword>
<keyword id="KW-0945">Host-virus interaction</keyword>
<keyword id="KW-0391">Immunity</keyword>
<keyword id="KW-0399">Innate immunity</keyword>
<keyword id="KW-1017">Isopeptide bond</keyword>
<keyword id="KW-0496">Mitochondrion</keyword>
<keyword id="KW-0539">Nucleus</keyword>
<keyword id="KW-0597">Phosphoprotein</keyword>
<keyword id="KW-1185">Reference proteome</keyword>
<keyword id="KW-0804">Transcription</keyword>
<keyword id="KW-0805">Transcription regulation</keyword>
<keyword id="KW-0832">Ubl conjugation</keyword>
<name>IRF3_PIG</name>
<evidence type="ECO:0000250" key="1">
    <source>
        <dbReference type="UniProtKB" id="P70671"/>
    </source>
</evidence>
<evidence type="ECO:0000250" key="2">
    <source>
        <dbReference type="UniProtKB" id="Q14653"/>
    </source>
</evidence>
<evidence type="ECO:0000255" key="3">
    <source>
        <dbReference type="PROSITE-ProRule" id="PRU00840"/>
    </source>
</evidence>
<evidence type="ECO:0000256" key="4">
    <source>
        <dbReference type="SAM" id="MobiDB-lite"/>
    </source>
</evidence>
<evidence type="ECO:0000269" key="5">
    <source>
    </source>
</evidence>
<evidence type="ECO:0000269" key="6">
    <source>
    </source>
</evidence>
<evidence type="ECO:0000269" key="7">
    <source>
    </source>
</evidence>
<evidence type="ECO:0000269" key="8">
    <source>
    </source>
</evidence>
<evidence type="ECO:0000269" key="9">
    <source>
    </source>
</evidence>
<evidence type="ECO:0000269" key="10">
    <source>
    </source>
</evidence>
<reference key="1">
    <citation type="journal article" date="2004" name="Nucleic Acids Res.">
        <title>PEDE (Pig EST Data Explorer): construction of a database for ESTs derived from porcine full-length cDNA libraries.</title>
        <authorList>
            <person name="Uenishi H."/>
            <person name="Eguchi T."/>
            <person name="Suzuki K."/>
            <person name="Sawazaki T."/>
            <person name="Toki D."/>
            <person name="Shinkai H."/>
            <person name="Okumura N."/>
            <person name="Hamasima N."/>
            <person name="Awata T."/>
        </authorList>
    </citation>
    <scope>NUCLEOTIDE SEQUENCE [LARGE SCALE MRNA]</scope>
</reference>
<reference key="2">
    <citation type="journal article" date="2021" name="Vet. Microbiol.">
        <title>Porcine epidemic diarrhea virus E protein suppresses RIG-I signaling-mediated interferon-beta production.</title>
        <authorList>
            <person name="Zheng L."/>
            <person name="Wang X."/>
            <person name="Guo D."/>
            <person name="Cao J."/>
            <person name="Cheng L."/>
            <person name="Li X."/>
            <person name="Zou D."/>
            <person name="Zhang Y."/>
            <person name="Xu J."/>
            <person name="Wu X."/>
            <person name="Shen Y."/>
            <person name="Wang H."/>
            <person name="Yu W."/>
            <person name="Li L."/>
            <person name="Xiao L."/>
            <person name="Song B."/>
            <person name="Ma J."/>
            <person name="Liu X."/>
            <person name="Li P."/>
            <person name="Xu S."/>
            <person name="Xu X."/>
            <person name="Zhang H."/>
            <person name="Wu Z."/>
            <person name="Cao H."/>
        </authorList>
    </citation>
    <scope>SUBCELLULAR LOCATION</scope>
    <scope>INTERACTION WITH PORCINE EPIDEMIC DIARRHEA VIRUS E PROTEIN (MICROBIAL INFECTION)</scope>
</reference>
<reference key="3">
    <citation type="journal article" date="2021" name="J. Virol.">
        <title>African swine fever virus E120R protein inhibits interferon-beta production by interacting with IRF3 to block its activation.</title>
        <authorList>
            <person name="Liu H."/>
            <person name="Zhu Z."/>
            <person name="Feng T."/>
            <person name="Ma Z."/>
            <person name="Xue Q."/>
            <person name="Wu P."/>
            <person name="Li P."/>
            <person name="Li S."/>
            <person name="Yang F."/>
            <person name="Cao W."/>
            <person name="Xue Z."/>
            <person name="Chen H."/>
            <person name="Liu X."/>
            <person name="Zheng H."/>
        </authorList>
    </citation>
    <scope>INTERACTION WITH ASFV P14.5/E120R (MICROBIAL INFECTION)</scope>
</reference>
<reference key="4">
    <citation type="journal article" date="2021" name="Front. Cell. Infect. Microbiol.">
        <title>African Swine Fever Virus MGF360-14L Negatively Regulates Type I Interferon Signaling by Targeting IRF3.</title>
        <authorList>
            <person name="Wang Y."/>
            <person name="Cui S."/>
            <person name="Xin T."/>
            <person name="Wang X."/>
            <person name="Yu H."/>
            <person name="Chen S."/>
            <person name="Jiang Y."/>
            <person name="Gao X."/>
            <person name="Jiang Y."/>
            <person name="Guo X."/>
            <person name="Jia H."/>
            <person name="Zhu H."/>
        </authorList>
    </citation>
    <scope>INTERACTION WITH AFRICAN SWINE FEVER VIRUS PROTEIN MGF360-14L (MICROBIAL INFECTION)</scope>
</reference>
<reference key="5">
    <citation type="journal article" date="2022" name="Vet. Microbiol.">
        <title>African swine fever virus pE301R negatively regulates cGAS-STING signaling pathway by inhibiting the nuclear translocation of IRF3.</title>
        <authorList>
            <person name="Liu X."/>
            <person name="Liu H."/>
            <person name="Ye G."/>
            <person name="Xue M."/>
            <person name="Yu H."/>
            <person name="Feng C."/>
            <person name="Zhou Q."/>
            <person name="Liu X."/>
            <person name="Zhang L."/>
            <person name="Jiao S."/>
            <person name="Weng C."/>
            <person name="Huang L."/>
        </authorList>
    </citation>
    <scope>INTERACTION WITH AFRICAN SWINE FEVER VIRUS PROTEIN E301R (MICROBIAL INFECTION)</scope>
    <scope>SUBCELLULAR LOCATION</scope>
</reference>
<reference key="6">
    <citation type="journal article" date="2022" name="Virus Res.">
        <title>African swine fever virus M1249L protein antagonizes type I interferon production via suppressing phosphorylation of TBK1 and degrading IRF3.</title>
        <authorList>
            <person name="Cui S."/>
            <person name="Wang Y."/>
            <person name="Gao X."/>
            <person name="Xin T."/>
            <person name="Wang X."/>
            <person name="Yu H."/>
            <person name="Chen S."/>
            <person name="Jiang Y."/>
            <person name="Chen Q."/>
            <person name="Jiang F."/>
            <person name="Wang D."/>
            <person name="Guo X."/>
            <person name="Jia H."/>
            <person name="Zhu H."/>
        </authorList>
    </citation>
    <scope>INTERACTION WITH AFRICAN SWINE FEVER VIRUS MINOR CAPSID PROTEIN M1249L (MICROBIAL INFECTION)</scope>
    <scope>SUBCELLULAR LOCATION</scope>
</reference>
<reference key="7">
    <citation type="journal article" date="2022" name="Viruses">
        <title>Pseudorabies Virus Tegument Protein UL13 Suppresses RLR-Mediated Antiviral Innate Immunity through Regulating Receptor Transcription.</title>
        <authorList>
            <person name="Zhao N."/>
            <person name="Wang F."/>
            <person name="Kong Z."/>
            <person name="Shang Y."/>
        </authorList>
    </citation>
    <scope>SUBCELLULAR LOCATION</scope>
    <scope>PHOSPHORYLATION BY SUID HERPESVIRUS 1 PROTEIN KINASE UL13 (MICROBIAL INFECTION)</scope>
</reference>
<gene>
    <name type="primary">IRF3</name>
</gene>
<sequence>MGTQKPRILPWLISQLNQGQLEGVAWLDEGHTRFRIPWKHGLRQDAQQEDFGIFQAWAEASGAYTPGKDKPDLPTWKRNFRSALNRKEALRLAEDHSKDPHDPHKIYEFVTSGVGDFPEPDTSLDLSGRYSTSDTHEDSLDKLLSGMDLASDAGPQSLTLALEQPPQLSLSPSVDAPASCPNLGVRENPLKQLLANDDEWEFQVTVFYRGCQVFQQTVCSPGGLRLVGSEAEDGTLAGQPVRLPDPAASLTDRGVADYVRRVLSCLGGGLALWRAGQWLWAQRLGHCHVYWAMGEELIPDSGHKPDGEVPKDREGGVFDLGPFIEDLIAFIEGSRRSPRYTLWFCMGQSWPQDEPWVKRLVMVKVVPMCLRALVDMARDGGASSLENTVDLHISNSHPLSLTSDQYKACLRDLVEDMDF</sequence>
<proteinExistence type="evidence at protein level"/>
<comment type="function">
    <text evidence="2">Key transcriptional regulator of type I interferon (IFN)-dependent immune responses which plays a critical role in the innate immune response against DNA and RNA viruses. Regulates the transcription of type I IFN genes (IFN-alpha and IFN-beta) and IFN-stimulated genes (ISG) by binding to an interferon-stimulated response element (ISRE) in their promoters. Acts as a more potent activator of the IFN-beta (IFNB) gene than the IFN-alpha (IFNA) gene and plays a critical role in both the early and late phases of the IFNA/B gene induction. Found in an inactive form in the cytoplasm of uninfected cells and following viral infection, double-stranded RNA (dsRNA), or toll-like receptor (TLR) signaling, is phosphorylated by IKBKE and TBK1 kinases. This induces a conformational change, leading to its dimerization and nuclear localization and association with CREB binding protein (CREBBP) to form dsRNA-activated factor 1 (DRAF1), a complex which activates the transcription of the type I IFN and ISG genes. Can activate distinct gene expression programs in macrophages and can induce significant apoptosis in primary macrophages.</text>
</comment>
<comment type="activity regulation">
    <text evidence="2">In the absence of viral infection, maintained as a monomer in an autoinhibited state. Phosphorylation by TBK1 and IKBKE disrupts this autoinhibition leading to the liberation of the DNA-binding and dimerization activities and its nuclear localization where it can activate type I IFN and ISG genes. Phosphorylation and activation follow the following steps: innate adapter proteins, such as MAVS, STING1 or TICAM1, are first activated by viral RNA, cytosolic DNA and bacterial lipopolysaccharide (LPS), respectively, leading to activation of the kinases TBK1 and IKBKE. These kinases then phosphorylate the adapter proteins on their pLxIS motif, leading to recruitment of IRF3, thereby licensing IRF3 for phosphorylation by TBK1. Phosphorylated IRF3 dissociates from the adapter proteins, dimerizes, and then enters the nucleus to induce IFNs.</text>
</comment>
<comment type="subunit">
    <text evidence="2">Monomer. Homodimer; phosphorylation-induced. Interacts (when phosphorylated) with CREBBP. Interacts with MAVS (via phosphorylated pLxIS motif). Interacts with TICAM1 (via phosphorylated pLxIS motif). Interacts with STING1 (via phosphorylated pLxIS motif). Interacts with IKBKE and TBK1. Interacts with TICAM2. Interacts with RBCK1. Interacts with HERC5. Interacts with DDX3X; the interaction allows the phosphorylation and activation of IRF3 by IKBKE. Interacts with TRIM21 and ULK1, in the presence of TRIM21; this interaction leads to IRF3 degradation by autophagy. Interacts with RIOK3; RIOK3 probably mediates the interaction of TBK1 with IRF3. Interacts with ILRUN; the interaction inhibits IRF3 binding to its DNA consensus sequence. Interacts with LYAR; this interaction impairs IRF3 DNA-binding activity. Interacts with TRAF3. Interacts with ZDHHC11; ZDHHC11 recruits IRF3 to STING1 upon DNA virus infection and thereby promotes IRF3 activation (By similarity). Interacts with HSP90AA1; the interaction mediates IRF3 association with TOMM70. Interacts with BCL2; the interaction decreases upon Sendai virus infection. Interacts with BAX; the interaction is direct, increases upon virus infection and mediates the formation of the apoptosis complex TOMM70:HSP90AA1:IRF3:BAX (By similarity). Interacts with DDX56 (By similarity). Interacts with NBR1 (By similarity).</text>
</comment>
<comment type="subunit">
    <text evidence="5">(Microbial infection) Interacts with Porcine epidemic diarrhea virus E protein; this interaction prevents IRF3 translocation to the nucleus and thereby prevents type I interferon production.</text>
</comment>
<comment type="subunit">
    <text evidence="6">(Microbial infection) Interacts with African swine fever virus (ASFV) P14.5/E120R; this interaction interferes with the recruitment of IRF3 to TBK1, which in turn suppresses IRF3 phosphorylation, decreasing interferon production via the cGAS/STING pathway.</text>
</comment>
<comment type="subunit">
    <text evidence="7">(Microbial infection) Interacts with African swine fever virus (ASFV) MGF360-14L; this interaction mediates degradation of IRF3 through TRIM21 and ubiquitin-meditated proteolysis.</text>
</comment>
<comment type="subunit">
    <text evidence="10">(Microbial infection) Interacts with African swine fever virus (ASFV) E301R; this interaction inhibits nuclear translocation of IRF3 to the nucleus.</text>
</comment>
<comment type="subunit">
    <text evidence="8">(Microbial infection) Interacts with African swine fever virus (ASFV) minor capsid protein M1249L; this interaction mediates IRF3 degradation.</text>
</comment>
<comment type="interaction">
    <interactant intactId="EBI-12512266">
        <id>Q764M6</id>
    </interactant>
    <interactant intactId="EBI-12595681">
        <id>F1RK46</id>
        <label>CREBBP</label>
    </interactant>
    <organismsDiffer>false</organismsDiffer>
    <experiments>8</experiments>
</comment>
<comment type="interaction">
    <interactant intactId="EBI-12512266">
        <id>Q764M6</id>
    </interactant>
    <interactant intactId="EBI-10901281">
        <id>PRO_0000038050</id>
        <dbReference type="UniProtKB" id="P19712"/>
    </interactant>
    <organismsDiffer>true</organismsDiffer>
    <experiments>4</experiments>
</comment>
<comment type="interaction">
    <interactant intactId="EBI-12512266">
        <id>Q764M6</id>
    </interactant>
    <interactant intactId="EBI-12522528">
        <id>Q68871</id>
    </interactant>
    <organismsDiffer>true</organismsDiffer>
    <experiments>5</experiments>
</comment>
<comment type="subcellular location">
    <subcellularLocation>
        <location evidence="5 8 9 10">Cytoplasm</location>
    </subcellularLocation>
    <subcellularLocation>
        <location evidence="5 9 10">Nucleus</location>
    </subcellularLocation>
    <subcellularLocation>
        <location evidence="2">Mitochondrion</location>
    </subcellularLocation>
    <text evidence="2">Shuttles between cytoplasmic and nuclear compartments, with export being the prevailing effect. When activated, IRF3 interaction with CREBBP prevents its export to the cytoplasm. Recruited to mitochondria via TOMM70:HSP90AA1 upon Sendai virus infection.</text>
</comment>
<comment type="PTM">
    <text evidence="2">Constitutively phosphorylated on many Ser/Thr residues. Activated following phosphorylation by TBK1 and IKBKE. Innate adapter proteins, such as MAVS, STING1 or TICAM1, are first activated by viral RNA, cytosolic DNA, and bacterial lipopolysaccharide (LPS), respectively, leading to activation of the kinases TBK1 and IKBKE. These kinases then phosphorylate the adapter proteins on the pLxIS motif, leading to recruitment of IRF3, thereby licensing IRF3 for phosphorylation by TBK1. Phosphorylation at Ser-384 is followed by pyrophosphorylation at the same residue, promoting phosphorylation at Ser-394. Phosphorylated IRF3 dissociates from the adapter proteins, dimerizes, and then enters the nucleus to induce IFNs.</text>
</comment>
<comment type="PTM">
    <text evidence="2">Pyrophosphorylated by UAP1 following phosphorylation at Ser-384 by TBK1. Pyrophosphorylation promotes subsequent phosphorylation at Ser-394, leading to homodimerization of IRF3.</text>
</comment>
<comment type="PTM">
    <text evidence="1">Acetylation at Lys-364 by KAT8 inhibits recruimtent to promoters and transcription factor activity. Acetylation by KAT8 is promoted by phosphorylation at Ser-394.</text>
</comment>
<comment type="PTM">
    <text evidence="2">Ubiquitinated; ubiquitination involves RBCK1 leading to proteasomal degradation. Polyubiquitinated; ubiquitination involves TRIM21 leading to proteasomal degradation. Ubiquitinated by UBE3C, leading to its degradation. Deubiquitinated by USP5 on both 'Lys-48'-linked unanchored and 'Lys-63'-linked anchored polyubiquitin, leading to inhibition of antiviral innate immunity.</text>
</comment>
<comment type="PTM">
    <text evidence="2">ISGylated by HERC5 resulting in sustained IRF3 activation and in the inhibition of IRF3 ubiquitination by disrupting PIN1 binding. The phosphorylation state of IRF3 does not alter ISGylation.</text>
</comment>
<comment type="PTM">
    <text evidence="9">(Microbial infection) Phosphorylated by pseudorabies virus protein kinase UL13; leading to decreased IRF3 binding to the IRF3-responsive promoters and downstream ISG expression.</text>
</comment>
<comment type="PTM">
    <text evidence="2">Proteolytically cleaved by apoptotic caspases during apoptosis, leading to its inactivation. Cleavage by CASP3 during virus-induced apoptosis inactivates it, preventing cytokine overproduction.</text>
</comment>
<comment type="similarity">
    <text evidence="3">Belongs to the IRF family.</text>
</comment>
<accession>Q764M6</accession>